<reference key="1">
    <citation type="journal article" date="2009" name="PLoS Genet.">
        <title>Organised genome dynamics in the Escherichia coli species results in highly diverse adaptive paths.</title>
        <authorList>
            <person name="Touchon M."/>
            <person name="Hoede C."/>
            <person name="Tenaillon O."/>
            <person name="Barbe V."/>
            <person name="Baeriswyl S."/>
            <person name="Bidet P."/>
            <person name="Bingen E."/>
            <person name="Bonacorsi S."/>
            <person name="Bouchier C."/>
            <person name="Bouvet O."/>
            <person name="Calteau A."/>
            <person name="Chiapello H."/>
            <person name="Clermont O."/>
            <person name="Cruveiller S."/>
            <person name="Danchin A."/>
            <person name="Diard M."/>
            <person name="Dossat C."/>
            <person name="Karoui M.E."/>
            <person name="Frapy E."/>
            <person name="Garry L."/>
            <person name="Ghigo J.M."/>
            <person name="Gilles A.M."/>
            <person name="Johnson J."/>
            <person name="Le Bouguenec C."/>
            <person name="Lescat M."/>
            <person name="Mangenot S."/>
            <person name="Martinez-Jehanne V."/>
            <person name="Matic I."/>
            <person name="Nassif X."/>
            <person name="Oztas S."/>
            <person name="Petit M.A."/>
            <person name="Pichon C."/>
            <person name="Rouy Z."/>
            <person name="Ruf C.S."/>
            <person name="Schneider D."/>
            <person name="Tourret J."/>
            <person name="Vacherie B."/>
            <person name="Vallenet D."/>
            <person name="Medigue C."/>
            <person name="Rocha E.P.C."/>
            <person name="Denamur E."/>
        </authorList>
    </citation>
    <scope>NUCLEOTIDE SEQUENCE [LARGE SCALE GENOMIC DNA]</scope>
    <source>
        <strain>UMN026 / ExPEC</strain>
    </source>
</reference>
<keyword id="KW-0963">Cytoplasm</keyword>
<keyword id="KW-0819">tRNA processing</keyword>
<dbReference type="EMBL" id="CU928163">
    <property type="protein sequence ID" value="CAR14951.1"/>
    <property type="molecule type" value="Genomic_DNA"/>
</dbReference>
<dbReference type="RefSeq" id="WP_000903377.1">
    <property type="nucleotide sequence ID" value="NC_011751.1"/>
</dbReference>
<dbReference type="RefSeq" id="YP_002414456.1">
    <property type="nucleotide sequence ID" value="NC_011751.1"/>
</dbReference>
<dbReference type="SMR" id="B7NDV1"/>
<dbReference type="STRING" id="585056.ECUMN_3803"/>
<dbReference type="GeneID" id="75206286"/>
<dbReference type="KEGG" id="eum:ECUMN_3803"/>
<dbReference type="PATRIC" id="fig|585056.7.peg.3977"/>
<dbReference type="HOGENOM" id="CLU_166087_2_1_6"/>
<dbReference type="Proteomes" id="UP000007097">
    <property type="component" value="Chromosome"/>
</dbReference>
<dbReference type="GO" id="GO:1990228">
    <property type="term" value="C:sulfurtransferase complex"/>
    <property type="evidence" value="ECO:0007669"/>
    <property type="project" value="TreeGrafter"/>
</dbReference>
<dbReference type="GO" id="GO:0002143">
    <property type="term" value="P:tRNA wobble position uridine thiolation"/>
    <property type="evidence" value="ECO:0007669"/>
    <property type="project" value="InterPro"/>
</dbReference>
<dbReference type="FunFam" id="3.40.1260.10:FF:000002">
    <property type="entry name" value="Sulfurtransferase TusB"/>
    <property type="match status" value="1"/>
</dbReference>
<dbReference type="Gene3D" id="3.40.1260.10">
    <property type="entry name" value="DsrEFH-like"/>
    <property type="match status" value="1"/>
</dbReference>
<dbReference type="HAMAP" id="MF_01564">
    <property type="entry name" value="Thiourid_synth_B"/>
    <property type="match status" value="1"/>
</dbReference>
<dbReference type="InterPro" id="IPR027396">
    <property type="entry name" value="DsrEFH-like"/>
</dbReference>
<dbReference type="InterPro" id="IPR023526">
    <property type="entry name" value="Sulphur_relay_TusB"/>
</dbReference>
<dbReference type="InterPro" id="IPR007215">
    <property type="entry name" value="Sulphur_relay_TusB/DsrH"/>
</dbReference>
<dbReference type="NCBIfam" id="NF010035">
    <property type="entry name" value="PRK13510.1"/>
    <property type="match status" value="1"/>
</dbReference>
<dbReference type="NCBIfam" id="TIGR03011">
    <property type="entry name" value="sulf_tusB_dsrH"/>
    <property type="match status" value="1"/>
</dbReference>
<dbReference type="PANTHER" id="PTHR37526">
    <property type="entry name" value="PROTEIN TUSB"/>
    <property type="match status" value="1"/>
</dbReference>
<dbReference type="PANTHER" id="PTHR37526:SF1">
    <property type="entry name" value="PROTEIN TUSB"/>
    <property type="match status" value="1"/>
</dbReference>
<dbReference type="Pfam" id="PF04077">
    <property type="entry name" value="DsrH"/>
    <property type="match status" value="1"/>
</dbReference>
<dbReference type="SUPFAM" id="SSF75169">
    <property type="entry name" value="DsrEFH-like"/>
    <property type="match status" value="1"/>
</dbReference>
<sequence length="95" mass="10692">MLHTLHRSPWLTDFAALLRLLSEGDELLLLQDGVTAAVDGNRYLESLRNAPIKVYALNEDLIARGLTGQISNDIIPIDYTDFVRLTVKHSSQMAW</sequence>
<name>TUSB_ECOLU</name>
<gene>
    <name evidence="1" type="primary">tusB</name>
    <name type="ordered locus">ECUMN_3803</name>
</gene>
<feature type="chain" id="PRO_1000147180" description="Protein TusB">
    <location>
        <begin position="1"/>
        <end position="95"/>
    </location>
</feature>
<evidence type="ECO:0000255" key="1">
    <source>
        <dbReference type="HAMAP-Rule" id="MF_01564"/>
    </source>
</evidence>
<organism>
    <name type="scientific">Escherichia coli O17:K52:H18 (strain UMN026 / ExPEC)</name>
    <dbReference type="NCBI Taxonomy" id="585056"/>
    <lineage>
        <taxon>Bacteria</taxon>
        <taxon>Pseudomonadati</taxon>
        <taxon>Pseudomonadota</taxon>
        <taxon>Gammaproteobacteria</taxon>
        <taxon>Enterobacterales</taxon>
        <taxon>Enterobacteriaceae</taxon>
        <taxon>Escherichia</taxon>
    </lineage>
</organism>
<proteinExistence type="inferred from homology"/>
<protein>
    <recommendedName>
        <fullName evidence="1">Protein TusB</fullName>
    </recommendedName>
    <alternativeName>
        <fullName evidence="1">tRNA 2-thiouridine synthesizing protein B</fullName>
    </alternativeName>
</protein>
<comment type="function">
    <text evidence="1">Part of a sulfur-relay system required for 2-thiolation of 5-methylaminomethyl-2-thiouridine (mnm(5)s(2)U) at tRNA wobble positions.</text>
</comment>
<comment type="subunit">
    <text evidence="1">Heterohexamer, formed by a dimer of trimers. The hexameric TusBCD complex contains 2 copies each of TusB, TusC and TusD. The TusBCD complex interacts with TusE.</text>
</comment>
<comment type="subcellular location">
    <subcellularLocation>
        <location evidence="1">Cytoplasm</location>
    </subcellularLocation>
</comment>
<comment type="similarity">
    <text evidence="1">Belongs to the DsrH/TusB family.</text>
</comment>
<accession>B7NDV1</accession>